<evidence type="ECO:0000250" key="1"/>
<evidence type="ECO:0000250" key="2">
    <source>
        <dbReference type="UniProtKB" id="P13674"/>
    </source>
</evidence>
<evidence type="ECO:0000255" key="3">
    <source>
        <dbReference type="PROSITE-ProRule" id="PRU00805"/>
    </source>
</evidence>
<evidence type="ECO:0000305" key="4"/>
<accession>P16924</accession>
<protein>
    <recommendedName>
        <fullName>Prolyl 4-hydroxylase subunit alpha-1</fullName>
        <shortName>4-PH alpha-1</shortName>
        <ecNumber evidence="2">1.14.11.2</ecNumber>
    </recommendedName>
    <alternativeName>
        <fullName>Procollagen-proline,2-oxoglutarate-4-dioxygenase subunit alpha-1</fullName>
    </alternativeName>
</protein>
<sequence length="516" mass="59440">HTDFFTSIGHMTDLINTEKDLVISKLKDYIKAEESKLEQIKKWAEKLDKLTDTATKDPEGFLGHPANAFKLMKRLNTEWGELESLVLKDMSDGFISNMTIQRQFFPNDEDQTGARKALLRLQDTYNLDTDTLSRGNLPGVKHKSFLTAEDCFELGKIRYTEADYYHTELWMEQALKQLDEGEVSSADKVYILDYLSYAVYQQGDLSKAMMLTKRLLELDPEHQRANGNMKYFEYIMAKEKEANKSSTDAEDQTDKETEVKKKDYLPERRKYEMLCRGEGLKMTPRRQKRLFCRYYDGNRNPRYILGPVKQEDEWDKPRIVRFLDIISDEEIETVKELAKPRLSRATVHDPETGKLTTAHYRVSKSAWLSGYESPVVSRINTRIQDLTGLDVSTAEELQVANYGVGGQYEPHFDFGRKDEPDAFKELGTGNRIATWLFYMSDVSAGGATVFPEVGASVWPKKGTAVFWYNLFPSGEGDYSTRHAACPVLVGNKWVSNKWLHERGQEFRRPCTLSELE</sequence>
<proteinExistence type="evidence at protein level"/>
<organism>
    <name type="scientific">Gallus gallus</name>
    <name type="common">Chicken</name>
    <dbReference type="NCBI Taxonomy" id="9031"/>
    <lineage>
        <taxon>Eukaryota</taxon>
        <taxon>Metazoa</taxon>
        <taxon>Chordata</taxon>
        <taxon>Craniata</taxon>
        <taxon>Vertebrata</taxon>
        <taxon>Euteleostomi</taxon>
        <taxon>Archelosauria</taxon>
        <taxon>Archosauria</taxon>
        <taxon>Dinosauria</taxon>
        <taxon>Saurischia</taxon>
        <taxon>Theropoda</taxon>
        <taxon>Coelurosauria</taxon>
        <taxon>Aves</taxon>
        <taxon>Neognathae</taxon>
        <taxon>Galloanserae</taxon>
        <taxon>Galliformes</taxon>
        <taxon>Phasianidae</taxon>
        <taxon>Phasianinae</taxon>
        <taxon>Gallus</taxon>
    </lineage>
</organism>
<dbReference type="EC" id="1.14.11.2" evidence="2"/>
<dbReference type="EMBL" id="M26217">
    <property type="protein sequence ID" value="AAA49002.1"/>
    <property type="molecule type" value="mRNA"/>
</dbReference>
<dbReference type="PIR" id="A33832">
    <property type="entry name" value="DACHA"/>
</dbReference>
<dbReference type="SMR" id="P16924"/>
<dbReference type="FunCoup" id="P16924">
    <property type="interactions" value="351"/>
</dbReference>
<dbReference type="STRING" id="9031.ENSGALP00000047674"/>
<dbReference type="BindingDB" id="P16924"/>
<dbReference type="GlyCosmos" id="P16924">
    <property type="glycosylation" value="2 sites, No reported glycans"/>
</dbReference>
<dbReference type="GlyGen" id="P16924">
    <property type="glycosylation" value="2 sites"/>
</dbReference>
<dbReference type="PaxDb" id="9031-ENSGALP00000006885"/>
<dbReference type="VEuPathDB" id="HostDB:geneid_423704"/>
<dbReference type="eggNOG" id="KOG1591">
    <property type="taxonomic scope" value="Eukaryota"/>
</dbReference>
<dbReference type="InParanoid" id="P16924"/>
<dbReference type="PhylomeDB" id="P16924"/>
<dbReference type="SABIO-RK" id="P16924"/>
<dbReference type="Proteomes" id="UP000000539">
    <property type="component" value="Unassembled WGS sequence"/>
</dbReference>
<dbReference type="GO" id="GO:0005783">
    <property type="term" value="C:endoplasmic reticulum"/>
    <property type="evidence" value="ECO:0000318"/>
    <property type="project" value="GO_Central"/>
</dbReference>
<dbReference type="GO" id="GO:0005788">
    <property type="term" value="C:endoplasmic reticulum lumen"/>
    <property type="evidence" value="ECO:0007669"/>
    <property type="project" value="UniProtKB-SubCell"/>
</dbReference>
<dbReference type="GO" id="GO:0005506">
    <property type="term" value="F:iron ion binding"/>
    <property type="evidence" value="ECO:0007669"/>
    <property type="project" value="InterPro"/>
</dbReference>
<dbReference type="GO" id="GO:0031418">
    <property type="term" value="F:L-ascorbic acid binding"/>
    <property type="evidence" value="ECO:0007669"/>
    <property type="project" value="UniProtKB-KW"/>
</dbReference>
<dbReference type="GO" id="GO:0004656">
    <property type="term" value="F:procollagen-proline 4-dioxygenase activity"/>
    <property type="evidence" value="ECO:0000250"/>
    <property type="project" value="UniProtKB"/>
</dbReference>
<dbReference type="GO" id="GO:0030199">
    <property type="term" value="P:collagen fibril organization"/>
    <property type="evidence" value="ECO:0000318"/>
    <property type="project" value="GO_Central"/>
</dbReference>
<dbReference type="FunFam" id="1.25.40.10:FF:000006">
    <property type="entry name" value="Prolyl 4-hydroxylase subunit alpha 2"/>
    <property type="match status" value="1"/>
</dbReference>
<dbReference type="FunFam" id="2.60.120.620:FF:000001">
    <property type="entry name" value="Prolyl 4-hydroxylase subunit alpha 2"/>
    <property type="match status" value="1"/>
</dbReference>
<dbReference type="Gene3D" id="6.10.140.1460">
    <property type="match status" value="1"/>
</dbReference>
<dbReference type="Gene3D" id="2.60.120.620">
    <property type="entry name" value="q2cbj1_9rhob like domain"/>
    <property type="match status" value="1"/>
</dbReference>
<dbReference type="Gene3D" id="1.25.40.10">
    <property type="entry name" value="Tetratricopeptide repeat domain"/>
    <property type="match status" value="1"/>
</dbReference>
<dbReference type="InterPro" id="IPR005123">
    <property type="entry name" value="Oxoglu/Fe-dep_dioxygenase_dom"/>
</dbReference>
<dbReference type="InterPro" id="IPR045054">
    <property type="entry name" value="P4HA-like"/>
</dbReference>
<dbReference type="InterPro" id="IPR006620">
    <property type="entry name" value="Pro_4_hyd_alph"/>
</dbReference>
<dbReference type="InterPro" id="IPR044862">
    <property type="entry name" value="Pro_4_hyd_alph_FE2OG_OXY"/>
</dbReference>
<dbReference type="InterPro" id="IPR013547">
    <property type="entry name" value="Pro_4_hyd_alph_N"/>
</dbReference>
<dbReference type="InterPro" id="IPR011990">
    <property type="entry name" value="TPR-like_helical_dom_sf"/>
</dbReference>
<dbReference type="InterPro" id="IPR019734">
    <property type="entry name" value="TPR_rpt"/>
</dbReference>
<dbReference type="PANTHER" id="PTHR10869">
    <property type="entry name" value="PROLYL 4-HYDROXYLASE ALPHA SUBUNIT"/>
    <property type="match status" value="1"/>
</dbReference>
<dbReference type="PANTHER" id="PTHR10869:SF101">
    <property type="entry name" value="PROLYL 4-HYDROXYLASE SUBUNIT ALPHA-1"/>
    <property type="match status" value="1"/>
</dbReference>
<dbReference type="Pfam" id="PF13640">
    <property type="entry name" value="2OG-FeII_Oxy_3"/>
    <property type="match status" value="1"/>
</dbReference>
<dbReference type="Pfam" id="PF08336">
    <property type="entry name" value="P4Ha_N"/>
    <property type="match status" value="1"/>
</dbReference>
<dbReference type="Pfam" id="PF23558">
    <property type="entry name" value="TPR_P4H"/>
    <property type="match status" value="1"/>
</dbReference>
<dbReference type="SMART" id="SM00702">
    <property type="entry name" value="P4Hc"/>
    <property type="match status" value="1"/>
</dbReference>
<dbReference type="SUPFAM" id="SSF48452">
    <property type="entry name" value="TPR-like"/>
    <property type="match status" value="1"/>
</dbReference>
<dbReference type="PROSITE" id="PS51471">
    <property type="entry name" value="FE2OG_OXY"/>
    <property type="match status" value="1"/>
</dbReference>
<dbReference type="PROSITE" id="PS50005">
    <property type="entry name" value="TPR"/>
    <property type="match status" value="1"/>
</dbReference>
<dbReference type="PROSITE" id="PS50293">
    <property type="entry name" value="TPR_REGION"/>
    <property type="match status" value="1"/>
</dbReference>
<comment type="function">
    <text evidence="2">Catalyzes the post-translational formation of 4-hydroxyproline in -Xaa-Pro-Gly- sequences in collagens and other proteins.</text>
</comment>
<comment type="catalytic activity">
    <reaction evidence="2">
        <text>L-prolyl-[collagen] + 2-oxoglutarate + O2 = trans-4-hydroxy-L-prolyl-[collagen] + succinate + CO2</text>
        <dbReference type="Rhea" id="RHEA:18945"/>
        <dbReference type="Rhea" id="RHEA-COMP:11676"/>
        <dbReference type="Rhea" id="RHEA-COMP:11680"/>
        <dbReference type="ChEBI" id="CHEBI:15379"/>
        <dbReference type="ChEBI" id="CHEBI:16526"/>
        <dbReference type="ChEBI" id="CHEBI:16810"/>
        <dbReference type="ChEBI" id="CHEBI:30031"/>
        <dbReference type="ChEBI" id="CHEBI:50342"/>
        <dbReference type="ChEBI" id="CHEBI:61965"/>
        <dbReference type="EC" id="1.14.11.2"/>
    </reaction>
</comment>
<comment type="cofactor">
    <cofactor evidence="3">
        <name>Fe(2+)</name>
        <dbReference type="ChEBI" id="CHEBI:29033"/>
    </cofactor>
    <text evidence="3">Binds 1 Fe(2+) ion per subunit.</text>
</comment>
<comment type="cofactor">
    <cofactor evidence="2">
        <name>L-ascorbate</name>
        <dbReference type="ChEBI" id="CHEBI:38290"/>
    </cofactor>
</comment>
<comment type="subunit">
    <text evidence="2">Heterotetramer of two alpha chains and two beta chains (the beta chain is the multi-functional PDI).</text>
</comment>
<comment type="subcellular location">
    <subcellularLocation>
        <location evidence="1">Endoplasmic reticulum lumen</location>
    </subcellularLocation>
</comment>
<comment type="similarity">
    <text evidence="4">Belongs to the P4HA family.</text>
</comment>
<name>P4HA1_CHICK</name>
<keyword id="KW-0223">Dioxygenase</keyword>
<keyword id="KW-0903">Direct protein sequencing</keyword>
<keyword id="KW-0256">Endoplasmic reticulum</keyword>
<keyword id="KW-0325">Glycoprotein</keyword>
<keyword id="KW-0408">Iron</keyword>
<keyword id="KW-0479">Metal-binding</keyword>
<keyword id="KW-0560">Oxidoreductase</keyword>
<keyword id="KW-1185">Reference proteome</keyword>
<keyword id="KW-0802">TPR repeat</keyword>
<keyword id="KW-0847">Vitamin C</keyword>
<feature type="chain" id="PRO_0000206659" description="Prolyl 4-hydroxylase subunit alpha-1">
    <location>
        <begin position="1"/>
        <end position="516"/>
    </location>
</feature>
<feature type="repeat" description="TPR">
    <location>
        <begin position="189"/>
        <end position="222"/>
    </location>
</feature>
<feature type="domain" description="Fe2OG dioxygenase" evidence="3">
    <location>
        <begin position="393"/>
        <end position="501"/>
    </location>
</feature>
<feature type="binding site" evidence="3">
    <location>
        <position position="411"/>
    </location>
    <ligand>
        <name>Fe cation</name>
        <dbReference type="ChEBI" id="CHEBI:24875"/>
    </ligand>
</feature>
<feature type="binding site" evidence="3">
    <location>
        <position position="413"/>
    </location>
    <ligand>
        <name>Fe cation</name>
        <dbReference type="ChEBI" id="CHEBI:24875"/>
    </ligand>
</feature>
<feature type="binding site" evidence="3">
    <location>
        <position position="482"/>
    </location>
    <ligand>
        <name>Fe cation</name>
        <dbReference type="ChEBI" id="CHEBI:24875"/>
    </ligand>
</feature>
<feature type="binding site" evidence="3">
    <location>
        <position position="492"/>
    </location>
    <ligand>
        <name>2-oxoglutarate</name>
        <dbReference type="ChEBI" id="CHEBI:16810"/>
    </ligand>
</feature>
<feature type="glycosylation site" description="N-linked (GlcNAc...) asparagine" evidence="4">
    <location>
        <position position="97"/>
    </location>
</feature>
<feature type="glycosylation site" description="N-linked (GlcNAc...) asparagine" evidence="4">
    <location>
        <position position="243"/>
    </location>
</feature>
<gene>
    <name type="primary">P4HA1</name>
    <name type="synonym">P4HA</name>
</gene>
<reference key="1">
    <citation type="journal article" date="1989" name="Proc. Natl. Acad. Sci. U.S.A.">
        <title>Prolyl 4-hydroxylase: molecular cloning and the primary structure of the alpha subunit from chicken embryo.</title>
        <authorList>
            <person name="Bassuk J.A."/>
            <person name="Kao W.W.-Y."/>
            <person name="Herzer P."/>
            <person name="Kedersha N."/>
            <person name="Seyer J."/>
            <person name="Demartino J.A."/>
            <person name="Daugherty B.L."/>
            <person name="Mark G.E. III"/>
            <person name="Berg R.A."/>
        </authorList>
    </citation>
    <scope>NUCLEOTIDE SEQUENCE [MRNA] OF 28-516</scope>
    <scope>PROTEIN SEQUENCE OF 1-42</scope>
</reference>